<comment type="function">
    <text evidence="1">Participates actively in the response to hyperosmotic and heat shock by preventing the aggregation of stress-denatured proteins, in association with DnaK and GrpE. It is the nucleotide exchange factor for DnaK and may function as a thermosensor. Unfolded proteins bind initially to DnaJ; upon interaction with the DnaJ-bound protein, DnaK hydrolyzes its bound ATP, resulting in the formation of a stable complex. GrpE releases ADP from DnaK; ATP binding to DnaK triggers the release of the substrate protein, thus completing the reaction cycle. Several rounds of ATP-dependent interactions between DnaJ, DnaK and GrpE are required for fully efficient folding.</text>
</comment>
<comment type="subunit">
    <text evidence="1">Homodimer.</text>
</comment>
<comment type="subcellular location">
    <subcellularLocation>
        <location evidence="1">Cytoplasm</location>
    </subcellularLocation>
</comment>
<comment type="similarity">
    <text evidence="1">Belongs to the GrpE family.</text>
</comment>
<comment type="caution">
    <text evidence="3">It is uncertain whether Met-1 or Met-11 is the initiator.</text>
</comment>
<comment type="sequence caution" evidence="3">
    <conflict type="erroneous initiation">
        <sequence resource="EMBL-CDS" id="AAK22141"/>
    </conflict>
</comment>
<proteinExistence type="inferred from homology"/>
<protein>
    <recommendedName>
        <fullName evidence="1">Protein GrpE</fullName>
    </recommendedName>
    <alternativeName>
        <fullName evidence="1">HSP-70 cofactor</fullName>
    </alternativeName>
</protein>
<gene>
    <name evidence="1" type="primary">grpE</name>
    <name type="ordered locus">CC_0154</name>
</gene>
<dbReference type="EMBL" id="AE005673">
    <property type="protein sequence ID" value="AAK22141.1"/>
    <property type="status" value="ALT_INIT"/>
    <property type="molecule type" value="Genomic_DNA"/>
</dbReference>
<dbReference type="PIR" id="A87268">
    <property type="entry name" value="A87268"/>
</dbReference>
<dbReference type="RefSeq" id="NP_418973.1">
    <property type="nucleotide sequence ID" value="NC_002696.2"/>
</dbReference>
<dbReference type="RefSeq" id="WP_012639893.1">
    <property type="nucleotide sequence ID" value="NC_002696.2"/>
</dbReference>
<dbReference type="SMR" id="P0CAV1"/>
<dbReference type="STRING" id="190650.CC_0154"/>
<dbReference type="EnsemblBacteria" id="AAK22141">
    <property type="protein sequence ID" value="AAK22141"/>
    <property type="gene ID" value="CC_0154"/>
</dbReference>
<dbReference type="KEGG" id="ccr:CC_0154"/>
<dbReference type="PATRIC" id="fig|190650.5.peg.151"/>
<dbReference type="eggNOG" id="COG0576">
    <property type="taxonomic scope" value="Bacteria"/>
</dbReference>
<dbReference type="HOGENOM" id="CLU_057217_6_2_5"/>
<dbReference type="Proteomes" id="UP000001816">
    <property type="component" value="Chromosome"/>
</dbReference>
<dbReference type="GO" id="GO:0005737">
    <property type="term" value="C:cytoplasm"/>
    <property type="evidence" value="ECO:0007669"/>
    <property type="project" value="UniProtKB-SubCell"/>
</dbReference>
<dbReference type="GO" id="GO:0000774">
    <property type="term" value="F:adenyl-nucleotide exchange factor activity"/>
    <property type="evidence" value="ECO:0007669"/>
    <property type="project" value="InterPro"/>
</dbReference>
<dbReference type="GO" id="GO:0042803">
    <property type="term" value="F:protein homodimerization activity"/>
    <property type="evidence" value="ECO:0007669"/>
    <property type="project" value="InterPro"/>
</dbReference>
<dbReference type="GO" id="GO:0051087">
    <property type="term" value="F:protein-folding chaperone binding"/>
    <property type="evidence" value="ECO:0007669"/>
    <property type="project" value="InterPro"/>
</dbReference>
<dbReference type="GO" id="GO:0051082">
    <property type="term" value="F:unfolded protein binding"/>
    <property type="evidence" value="ECO:0007669"/>
    <property type="project" value="TreeGrafter"/>
</dbReference>
<dbReference type="GO" id="GO:0006457">
    <property type="term" value="P:protein folding"/>
    <property type="evidence" value="ECO:0007669"/>
    <property type="project" value="InterPro"/>
</dbReference>
<dbReference type="CDD" id="cd00446">
    <property type="entry name" value="GrpE"/>
    <property type="match status" value="1"/>
</dbReference>
<dbReference type="FunFam" id="2.30.22.10:FF:000001">
    <property type="entry name" value="Protein GrpE"/>
    <property type="match status" value="1"/>
</dbReference>
<dbReference type="Gene3D" id="3.90.20.20">
    <property type="match status" value="1"/>
</dbReference>
<dbReference type="Gene3D" id="2.30.22.10">
    <property type="entry name" value="Head domain of nucleotide exchange factor GrpE"/>
    <property type="match status" value="1"/>
</dbReference>
<dbReference type="HAMAP" id="MF_01151">
    <property type="entry name" value="GrpE"/>
    <property type="match status" value="1"/>
</dbReference>
<dbReference type="InterPro" id="IPR000740">
    <property type="entry name" value="GrpE"/>
</dbReference>
<dbReference type="InterPro" id="IPR013805">
    <property type="entry name" value="GrpE_coiled_coil"/>
</dbReference>
<dbReference type="InterPro" id="IPR009012">
    <property type="entry name" value="GrpE_head"/>
</dbReference>
<dbReference type="NCBIfam" id="NF010738">
    <property type="entry name" value="PRK14140.1"/>
    <property type="match status" value="1"/>
</dbReference>
<dbReference type="NCBIfam" id="NF010748">
    <property type="entry name" value="PRK14150.1"/>
    <property type="match status" value="1"/>
</dbReference>
<dbReference type="NCBIfam" id="NF010752">
    <property type="entry name" value="PRK14155.1"/>
    <property type="match status" value="1"/>
</dbReference>
<dbReference type="PANTHER" id="PTHR21237">
    <property type="entry name" value="GRPE PROTEIN"/>
    <property type="match status" value="1"/>
</dbReference>
<dbReference type="PANTHER" id="PTHR21237:SF23">
    <property type="entry name" value="GRPE PROTEIN HOMOLOG, MITOCHONDRIAL"/>
    <property type="match status" value="1"/>
</dbReference>
<dbReference type="Pfam" id="PF01025">
    <property type="entry name" value="GrpE"/>
    <property type="match status" value="1"/>
</dbReference>
<dbReference type="PRINTS" id="PR00773">
    <property type="entry name" value="GRPEPROTEIN"/>
</dbReference>
<dbReference type="SUPFAM" id="SSF58014">
    <property type="entry name" value="Coiled-coil domain of nucleotide exchange factor GrpE"/>
    <property type="match status" value="1"/>
</dbReference>
<dbReference type="SUPFAM" id="SSF51064">
    <property type="entry name" value="Head domain of nucleotide exchange factor GrpE"/>
    <property type="match status" value="1"/>
</dbReference>
<dbReference type="PROSITE" id="PS01071">
    <property type="entry name" value="GRPE"/>
    <property type="match status" value="1"/>
</dbReference>
<accession>P0CAV1</accession>
<accession>P48195</accession>
<keyword id="KW-0143">Chaperone</keyword>
<keyword id="KW-0963">Cytoplasm</keyword>
<keyword id="KW-1185">Reference proteome</keyword>
<keyword id="KW-0346">Stress response</keyword>
<feature type="chain" id="PRO_0000113765" description="Protein GrpE">
    <location>
        <begin position="1"/>
        <end position="208"/>
    </location>
</feature>
<feature type="region of interest" description="Disordered" evidence="2">
    <location>
        <begin position="172"/>
        <end position="208"/>
    </location>
</feature>
<feature type="compositionally biased region" description="Low complexity" evidence="2">
    <location>
        <begin position="173"/>
        <end position="197"/>
    </location>
</feature>
<organism>
    <name type="scientific">Caulobacter vibrioides (strain ATCC 19089 / CIP 103742 / CB 15)</name>
    <name type="common">Caulobacter crescentus</name>
    <dbReference type="NCBI Taxonomy" id="190650"/>
    <lineage>
        <taxon>Bacteria</taxon>
        <taxon>Pseudomonadati</taxon>
        <taxon>Pseudomonadota</taxon>
        <taxon>Alphaproteobacteria</taxon>
        <taxon>Caulobacterales</taxon>
        <taxon>Caulobacteraceae</taxon>
        <taxon>Caulobacter</taxon>
    </lineage>
</organism>
<reference key="1">
    <citation type="journal article" date="2001" name="Proc. Natl. Acad. Sci. U.S.A.">
        <title>Complete genome sequence of Caulobacter crescentus.</title>
        <authorList>
            <person name="Nierman W.C."/>
            <person name="Feldblyum T.V."/>
            <person name="Laub M.T."/>
            <person name="Paulsen I.T."/>
            <person name="Nelson K.E."/>
            <person name="Eisen J.A."/>
            <person name="Heidelberg J.F."/>
            <person name="Alley M.R.K."/>
            <person name="Ohta N."/>
            <person name="Maddock J.R."/>
            <person name="Potocka I."/>
            <person name="Nelson W.C."/>
            <person name="Newton A."/>
            <person name="Stephens C."/>
            <person name="Phadke N.D."/>
            <person name="Ely B."/>
            <person name="DeBoy R.T."/>
            <person name="Dodson R.J."/>
            <person name="Durkin A.S."/>
            <person name="Gwinn M.L."/>
            <person name="Haft D.H."/>
            <person name="Kolonay J.F."/>
            <person name="Smit J."/>
            <person name="Craven M.B."/>
            <person name="Khouri H.M."/>
            <person name="Shetty J."/>
            <person name="Berry K.J."/>
            <person name="Utterback T.R."/>
            <person name="Tran K."/>
            <person name="Wolf A.M."/>
            <person name="Vamathevan J.J."/>
            <person name="Ermolaeva M.D."/>
            <person name="White O."/>
            <person name="Salzberg S.L."/>
            <person name="Venter J.C."/>
            <person name="Shapiro L."/>
            <person name="Fraser C.M."/>
        </authorList>
    </citation>
    <scope>NUCLEOTIDE SEQUENCE [LARGE SCALE GENOMIC DNA]</scope>
    <source>
        <strain>ATCC 19089 / CIP 103742 / CB 15</strain>
    </source>
</reference>
<evidence type="ECO:0000255" key="1">
    <source>
        <dbReference type="HAMAP-Rule" id="MF_01151"/>
    </source>
</evidence>
<evidence type="ECO:0000256" key="2">
    <source>
        <dbReference type="SAM" id="MobiDB-lite"/>
    </source>
</evidence>
<evidence type="ECO:0000305" key="3"/>
<name>GRPE_CAUVC</name>
<sequence>MTDEQTPAEEMPFEADDAAQEIEALKLEVAQLKEQALRYAAEAENTKRRAEREMNDARAYAIQKFARDLLGAADNLGRATAHSPKDSTDPAVKNFIIGVEMTEKELQSAFERNGLKKIDPAKGDKFDPHLHQAVTEQPSTEVAAGGVLMVMQAGYELMGRLVRPAMVAVAAKGSTGPASPDAPAASANPYAGAAAEGDSTGGAFDAKA</sequence>